<sequence>MRQRILVVDDDASLAEMLTIVLRGEGFDTAVIGDGTQALTAVRELRPDLVLLDLMLPGMNGIDVCRVLRADSGVPIVMLTAKTDTVDVVLGLESGADDYIMKPFKPKELVARVRARLRRNDDEPAEMLSIADVEIDVPAHKVTRNGEQISLTPLEFDLLVALARKPRQVFTRDVLLEQVWGYRHPADTRLVNVHVQRLRAKVEKDPENPTVVLTVRGVGYKAGPP</sequence>
<feature type="chain" id="PRO_0000081142" description="DNA-binding response regulator MtrA">
    <location>
        <begin position="1"/>
        <end position="225"/>
    </location>
</feature>
<feature type="domain" description="Response regulatory" evidence="2">
    <location>
        <begin position="4"/>
        <end position="117"/>
    </location>
</feature>
<feature type="DNA-binding region" description="OmpR/PhoB-type" evidence="3">
    <location>
        <begin position="125"/>
        <end position="224"/>
    </location>
</feature>
<feature type="modified residue" description="4-aspartylphosphate" evidence="2">
    <location>
        <position position="53"/>
    </location>
</feature>
<feature type="sequence conflict" description="In Ref. 1; AAL10207." evidence="4" ref="1">
    <original>P</original>
    <variation>S</variation>
    <location>
        <position position="225"/>
    </location>
</feature>
<comment type="function">
    <text evidence="1">Member of the two-component regulatory system MtrA/MtrB.</text>
</comment>
<comment type="PTM">
    <text evidence="4">Phosphorylated by MtrB.</text>
</comment>
<comment type="sequence caution" evidence="4">
    <conflict type="erroneous initiation">
        <sequence resource="EMBL-CDS" id="AAS05910"/>
    </conflict>
</comment>
<reference key="1">
    <citation type="submission" date="2001-08" db="EMBL/GenBank/DDBJ databases">
        <title>Identification and initial characterization of the mtrAB two-component signal transduction system of Mycobacterium avium subspecies paratuberculosis.</title>
        <authorList>
            <person name="Urbanic K.W."/>
            <person name="Mutharia L.M."/>
        </authorList>
    </citation>
    <scope>NUCLEOTIDE SEQUENCE [GENOMIC DNA]</scope>
    <source>
        <strain>ATCC 19698 / CIP 103963 / DSM 44133 / TMC 807</strain>
    </source>
</reference>
<reference key="2">
    <citation type="journal article" date="2005" name="Proc. Natl. Acad. Sci. U.S.A.">
        <title>The complete genome sequence of Mycobacterium avium subspecies paratuberculosis.</title>
        <authorList>
            <person name="Li L."/>
            <person name="Bannantine J.P."/>
            <person name="Zhang Q."/>
            <person name="Amonsin A."/>
            <person name="May B.J."/>
            <person name="Alt D."/>
            <person name="Banerji N."/>
            <person name="Kanjilal S."/>
            <person name="Kapur V."/>
        </authorList>
    </citation>
    <scope>NUCLEOTIDE SEQUENCE [LARGE SCALE GENOMIC DNA]</scope>
    <source>
        <strain>ATCC BAA-968 / K-10</strain>
    </source>
</reference>
<name>MTRA_MYCPA</name>
<keyword id="KW-0238">DNA-binding</keyword>
<keyword id="KW-0597">Phosphoprotein</keyword>
<keyword id="KW-1185">Reference proteome</keyword>
<keyword id="KW-0804">Transcription</keyword>
<keyword id="KW-0805">Transcription regulation</keyword>
<keyword id="KW-0902">Two-component regulatory system</keyword>
<evidence type="ECO:0000250" key="1"/>
<evidence type="ECO:0000255" key="2">
    <source>
        <dbReference type="PROSITE-ProRule" id="PRU00169"/>
    </source>
</evidence>
<evidence type="ECO:0000255" key="3">
    <source>
        <dbReference type="PROSITE-ProRule" id="PRU01091"/>
    </source>
</evidence>
<evidence type="ECO:0000305" key="4"/>
<organism>
    <name type="scientific">Mycolicibacterium paratuberculosis (strain ATCC BAA-968 / K-10)</name>
    <name type="common">Mycobacterium paratuberculosis</name>
    <dbReference type="NCBI Taxonomy" id="262316"/>
    <lineage>
        <taxon>Bacteria</taxon>
        <taxon>Bacillati</taxon>
        <taxon>Actinomycetota</taxon>
        <taxon>Actinomycetes</taxon>
        <taxon>Mycobacteriales</taxon>
        <taxon>Mycobacteriaceae</taxon>
        <taxon>Mycobacterium</taxon>
        <taxon>Mycobacterium avium complex (MAC)</taxon>
    </lineage>
</organism>
<gene>
    <name type="primary">mtrA</name>
    <name type="ordered locus">MAP_3360c</name>
</gene>
<accession>Q93CB8</accession>
<protein>
    <recommendedName>
        <fullName>DNA-binding response regulator MtrA</fullName>
    </recommendedName>
</protein>
<dbReference type="EMBL" id="AF410884">
    <property type="protein sequence ID" value="AAL10207.1"/>
    <property type="molecule type" value="Genomic_DNA"/>
</dbReference>
<dbReference type="EMBL" id="AE016958">
    <property type="protein sequence ID" value="AAS05910.1"/>
    <property type="status" value="ALT_INIT"/>
    <property type="molecule type" value="Genomic_DNA"/>
</dbReference>
<dbReference type="SMR" id="Q93CB8"/>
<dbReference type="STRING" id="262316.MAP_3360c"/>
<dbReference type="KEGG" id="mpa:MAP_3360c"/>
<dbReference type="eggNOG" id="COG0745">
    <property type="taxonomic scope" value="Bacteria"/>
</dbReference>
<dbReference type="HOGENOM" id="CLU_000445_30_4_11"/>
<dbReference type="Proteomes" id="UP000000580">
    <property type="component" value="Chromosome"/>
</dbReference>
<dbReference type="GO" id="GO:0005829">
    <property type="term" value="C:cytosol"/>
    <property type="evidence" value="ECO:0007669"/>
    <property type="project" value="TreeGrafter"/>
</dbReference>
<dbReference type="GO" id="GO:0032993">
    <property type="term" value="C:protein-DNA complex"/>
    <property type="evidence" value="ECO:0007669"/>
    <property type="project" value="TreeGrafter"/>
</dbReference>
<dbReference type="GO" id="GO:0000156">
    <property type="term" value="F:phosphorelay response regulator activity"/>
    <property type="evidence" value="ECO:0007669"/>
    <property type="project" value="InterPro"/>
</dbReference>
<dbReference type="GO" id="GO:0000976">
    <property type="term" value="F:transcription cis-regulatory region binding"/>
    <property type="evidence" value="ECO:0007669"/>
    <property type="project" value="InterPro"/>
</dbReference>
<dbReference type="GO" id="GO:0045893">
    <property type="term" value="P:positive regulation of DNA-templated transcription"/>
    <property type="evidence" value="ECO:0007669"/>
    <property type="project" value="InterPro"/>
</dbReference>
<dbReference type="CDD" id="cd17626">
    <property type="entry name" value="REC_OmpR_MtrA-like"/>
    <property type="match status" value="1"/>
</dbReference>
<dbReference type="CDD" id="cd00383">
    <property type="entry name" value="trans_reg_C"/>
    <property type="match status" value="1"/>
</dbReference>
<dbReference type="FunFam" id="1.10.10.10:FF:000033">
    <property type="entry name" value="DNA-binding response regulator MtrA"/>
    <property type="match status" value="1"/>
</dbReference>
<dbReference type="FunFam" id="3.40.50.2300:FF:000001">
    <property type="entry name" value="DNA-binding response regulator PhoB"/>
    <property type="match status" value="1"/>
</dbReference>
<dbReference type="Gene3D" id="3.40.50.2300">
    <property type="match status" value="1"/>
</dbReference>
<dbReference type="Gene3D" id="6.10.250.690">
    <property type="match status" value="1"/>
</dbReference>
<dbReference type="Gene3D" id="1.10.10.10">
    <property type="entry name" value="Winged helix-like DNA-binding domain superfamily/Winged helix DNA-binding domain"/>
    <property type="match status" value="1"/>
</dbReference>
<dbReference type="InterPro" id="IPR011006">
    <property type="entry name" value="CheY-like_superfamily"/>
</dbReference>
<dbReference type="InterPro" id="IPR047673">
    <property type="entry name" value="MtrA_REC"/>
</dbReference>
<dbReference type="InterPro" id="IPR047671">
    <property type="entry name" value="MtrAB_MtrA"/>
</dbReference>
<dbReference type="InterPro" id="IPR001867">
    <property type="entry name" value="OmpR/PhoB-type_DNA-bd"/>
</dbReference>
<dbReference type="InterPro" id="IPR001789">
    <property type="entry name" value="Sig_transdc_resp-reg_receiver"/>
</dbReference>
<dbReference type="InterPro" id="IPR039420">
    <property type="entry name" value="WalR-like"/>
</dbReference>
<dbReference type="InterPro" id="IPR036388">
    <property type="entry name" value="WH-like_DNA-bd_sf"/>
</dbReference>
<dbReference type="NCBIfam" id="NF040689">
    <property type="entry name" value="MtrAB_MtrA"/>
    <property type="match status" value="1"/>
</dbReference>
<dbReference type="PANTHER" id="PTHR48111:SF21">
    <property type="entry name" value="DNA-BINDING DUAL MASTER TRANSCRIPTIONAL REGULATOR RPAA"/>
    <property type="match status" value="1"/>
</dbReference>
<dbReference type="PANTHER" id="PTHR48111">
    <property type="entry name" value="REGULATOR OF RPOS"/>
    <property type="match status" value="1"/>
</dbReference>
<dbReference type="Pfam" id="PF00072">
    <property type="entry name" value="Response_reg"/>
    <property type="match status" value="1"/>
</dbReference>
<dbReference type="Pfam" id="PF00486">
    <property type="entry name" value="Trans_reg_C"/>
    <property type="match status" value="1"/>
</dbReference>
<dbReference type="SMART" id="SM00448">
    <property type="entry name" value="REC"/>
    <property type="match status" value="1"/>
</dbReference>
<dbReference type="SMART" id="SM00862">
    <property type="entry name" value="Trans_reg_C"/>
    <property type="match status" value="1"/>
</dbReference>
<dbReference type="SUPFAM" id="SSF52172">
    <property type="entry name" value="CheY-like"/>
    <property type="match status" value="1"/>
</dbReference>
<dbReference type="PROSITE" id="PS51755">
    <property type="entry name" value="OMPR_PHOB"/>
    <property type="match status" value="1"/>
</dbReference>
<dbReference type="PROSITE" id="PS50110">
    <property type="entry name" value="RESPONSE_REGULATORY"/>
    <property type="match status" value="1"/>
</dbReference>
<proteinExistence type="inferred from homology"/>